<organism>
    <name type="scientific">Syntrophomonas wolfei subsp. wolfei (strain DSM 2245B / Goettingen)</name>
    <dbReference type="NCBI Taxonomy" id="335541"/>
    <lineage>
        <taxon>Bacteria</taxon>
        <taxon>Bacillati</taxon>
        <taxon>Bacillota</taxon>
        <taxon>Clostridia</taxon>
        <taxon>Eubacteriales</taxon>
        <taxon>Syntrophomonadaceae</taxon>
        <taxon>Syntrophomonas</taxon>
    </lineage>
</organism>
<accession>Q0AYI3</accession>
<keyword id="KW-1185">Reference proteome</keyword>
<keyword id="KW-0687">Ribonucleoprotein</keyword>
<keyword id="KW-0689">Ribosomal protein</keyword>
<keyword id="KW-0694">RNA-binding</keyword>
<keyword id="KW-0699">rRNA-binding</keyword>
<feature type="chain" id="PRO_1000054889" description="Small ribosomal subunit protein uS15">
    <location>
        <begin position="1"/>
        <end position="89"/>
    </location>
</feature>
<reference key="1">
    <citation type="journal article" date="2010" name="Environ. Microbiol.">
        <title>The genome of Syntrophomonas wolfei: new insights into syntrophic metabolism and biohydrogen production.</title>
        <authorList>
            <person name="Sieber J.R."/>
            <person name="Sims D.R."/>
            <person name="Han C."/>
            <person name="Kim E."/>
            <person name="Lykidis A."/>
            <person name="Lapidus A.L."/>
            <person name="McDonnald E."/>
            <person name="Rohlin L."/>
            <person name="Culley D.E."/>
            <person name="Gunsalus R."/>
            <person name="McInerney M.J."/>
        </authorList>
    </citation>
    <scope>NUCLEOTIDE SEQUENCE [LARGE SCALE GENOMIC DNA]</scope>
    <source>
        <strain>DSM 2245B / Goettingen</strain>
    </source>
</reference>
<comment type="function">
    <text evidence="1">One of the primary rRNA binding proteins, it binds directly to 16S rRNA where it helps nucleate assembly of the platform of the 30S subunit by binding and bridging several RNA helices of the 16S rRNA.</text>
</comment>
<comment type="function">
    <text evidence="1">Forms an intersubunit bridge (bridge B4) with the 23S rRNA of the 50S subunit in the ribosome.</text>
</comment>
<comment type="subunit">
    <text evidence="1">Part of the 30S ribosomal subunit. Forms a bridge to the 50S subunit in the 70S ribosome, contacting the 23S rRNA.</text>
</comment>
<comment type="similarity">
    <text evidence="1">Belongs to the universal ribosomal protein uS15 family.</text>
</comment>
<dbReference type="EMBL" id="CP000448">
    <property type="protein sequence ID" value="ABI68221.1"/>
    <property type="molecule type" value="Genomic_DNA"/>
</dbReference>
<dbReference type="RefSeq" id="WP_011640326.1">
    <property type="nucleotide sequence ID" value="NC_008346.1"/>
</dbReference>
<dbReference type="SMR" id="Q0AYI3"/>
<dbReference type="STRING" id="335541.Swol_0905"/>
<dbReference type="KEGG" id="swo:Swol_0905"/>
<dbReference type="eggNOG" id="COG0184">
    <property type="taxonomic scope" value="Bacteria"/>
</dbReference>
<dbReference type="HOGENOM" id="CLU_148518_0_0_9"/>
<dbReference type="OrthoDB" id="9799262at2"/>
<dbReference type="Proteomes" id="UP000001968">
    <property type="component" value="Chromosome"/>
</dbReference>
<dbReference type="GO" id="GO:0022627">
    <property type="term" value="C:cytosolic small ribosomal subunit"/>
    <property type="evidence" value="ECO:0007669"/>
    <property type="project" value="TreeGrafter"/>
</dbReference>
<dbReference type="GO" id="GO:0019843">
    <property type="term" value="F:rRNA binding"/>
    <property type="evidence" value="ECO:0007669"/>
    <property type="project" value="UniProtKB-UniRule"/>
</dbReference>
<dbReference type="GO" id="GO:0003735">
    <property type="term" value="F:structural constituent of ribosome"/>
    <property type="evidence" value="ECO:0007669"/>
    <property type="project" value="InterPro"/>
</dbReference>
<dbReference type="GO" id="GO:0006412">
    <property type="term" value="P:translation"/>
    <property type="evidence" value="ECO:0007669"/>
    <property type="project" value="UniProtKB-UniRule"/>
</dbReference>
<dbReference type="CDD" id="cd00353">
    <property type="entry name" value="Ribosomal_S15p_S13e"/>
    <property type="match status" value="1"/>
</dbReference>
<dbReference type="FunFam" id="1.10.287.10:FF:000002">
    <property type="entry name" value="30S ribosomal protein S15"/>
    <property type="match status" value="1"/>
</dbReference>
<dbReference type="Gene3D" id="6.10.250.3130">
    <property type="match status" value="1"/>
</dbReference>
<dbReference type="Gene3D" id="1.10.287.10">
    <property type="entry name" value="S15/NS1, RNA-binding"/>
    <property type="match status" value="1"/>
</dbReference>
<dbReference type="HAMAP" id="MF_01343_B">
    <property type="entry name" value="Ribosomal_uS15_B"/>
    <property type="match status" value="1"/>
</dbReference>
<dbReference type="InterPro" id="IPR000589">
    <property type="entry name" value="Ribosomal_uS15"/>
</dbReference>
<dbReference type="InterPro" id="IPR005290">
    <property type="entry name" value="Ribosomal_uS15_bac-type"/>
</dbReference>
<dbReference type="InterPro" id="IPR009068">
    <property type="entry name" value="uS15_NS1_RNA-bd_sf"/>
</dbReference>
<dbReference type="NCBIfam" id="TIGR00952">
    <property type="entry name" value="S15_bact"/>
    <property type="match status" value="1"/>
</dbReference>
<dbReference type="PANTHER" id="PTHR23321">
    <property type="entry name" value="RIBOSOMAL PROTEIN S15, BACTERIAL AND ORGANELLAR"/>
    <property type="match status" value="1"/>
</dbReference>
<dbReference type="PANTHER" id="PTHR23321:SF26">
    <property type="entry name" value="SMALL RIBOSOMAL SUBUNIT PROTEIN US15M"/>
    <property type="match status" value="1"/>
</dbReference>
<dbReference type="Pfam" id="PF00312">
    <property type="entry name" value="Ribosomal_S15"/>
    <property type="match status" value="1"/>
</dbReference>
<dbReference type="SMART" id="SM01387">
    <property type="entry name" value="Ribosomal_S15"/>
    <property type="match status" value="1"/>
</dbReference>
<dbReference type="SUPFAM" id="SSF47060">
    <property type="entry name" value="S15/NS1 RNA-binding domain"/>
    <property type="match status" value="1"/>
</dbReference>
<name>RS15_SYNWW</name>
<sequence>MALSLERKGEIIKTYQIHENDTGSPEVQIAILTERINYLNEHLKINSKDHHSRRGLLKMVGQRRSLLDYLKKKDFERYRSIVTRLGLRR</sequence>
<evidence type="ECO:0000255" key="1">
    <source>
        <dbReference type="HAMAP-Rule" id="MF_01343"/>
    </source>
</evidence>
<evidence type="ECO:0000305" key="2"/>
<protein>
    <recommendedName>
        <fullName evidence="1">Small ribosomal subunit protein uS15</fullName>
    </recommendedName>
    <alternativeName>
        <fullName evidence="2">30S ribosomal protein S15</fullName>
    </alternativeName>
</protein>
<proteinExistence type="inferred from homology"/>
<gene>
    <name evidence="1" type="primary">rpsO</name>
    <name type="ordered locus">Swol_0905</name>
</gene>